<organismHost>
    <name type="scientific">Cynomys gunnisoni</name>
    <name type="common">Gunnison's prairie dog</name>
    <name type="synonym">Spermophilus gunnisoni</name>
    <dbReference type="NCBI Taxonomy" id="45479"/>
</organismHost>
<organismHost>
    <name type="scientific">Cynomys leucurus</name>
    <name type="common">White-tailed prairie dog</name>
    <dbReference type="NCBI Taxonomy" id="99825"/>
</organismHost>
<organismHost>
    <name type="scientific">Cynomys ludovicianus</name>
    <name type="common">Black-tailed prairie dog</name>
    <dbReference type="NCBI Taxonomy" id="45480"/>
</organismHost>
<organismHost>
    <name type="scientific">Cynomys mexicanus</name>
    <name type="common">Mexican prairie dog</name>
    <dbReference type="NCBI Taxonomy" id="99826"/>
</organismHost>
<organismHost>
    <name type="scientific">Cynomys parvidens</name>
    <name type="common">Utah prairie dog</name>
    <dbReference type="NCBI Taxonomy" id="99827"/>
</organismHost>
<organismHost>
    <name type="scientific">Gliridae</name>
    <name type="common">dormice</name>
    <dbReference type="NCBI Taxonomy" id="30650"/>
</organismHost>
<organismHost>
    <name type="scientific">Heliosciurus ruwenzorii</name>
    <name type="common">Ruwenzori sun squirrel</name>
    <dbReference type="NCBI Taxonomy" id="226685"/>
</organismHost>
<organismHost>
    <name type="scientific">Homo sapiens</name>
    <name type="common">Human</name>
    <dbReference type="NCBI Taxonomy" id="9606"/>
</organismHost>
<organismHost>
    <name type="scientific">Mus musculus</name>
    <name type="common">Mouse</name>
    <dbReference type="NCBI Taxonomy" id="10090"/>
</organismHost>
<sequence length="150" mass="18007">MGIQHEFDIIINGDIALRNLQLHRGDNYGCKLKIISNDYKKLKLRFVIRPDWSEIDEVKGLTVFANNYAVKVNKVDYTLYYVIYEAVIHLYNKKTEILIYSDDENELFKHYYPYISLNMISKKYKIKEENYSSPYIEHPLIPYRDYESMD</sequence>
<comment type="function">
    <text evidence="1">Plays a role for multiplication of the virus in different cell types.</text>
</comment>
<comment type="induction">
    <text evidence="2">Expressed in the early phase of the viral replicative cycle.</text>
</comment>
<comment type="similarity">
    <text evidence="3">Belongs to the orthopoxvirus OPG027 family.</text>
</comment>
<dbReference type="EMBL" id="AF380138">
    <property type="protein sequence ID" value="AAL40471.1"/>
    <property type="molecule type" value="Genomic_DNA"/>
</dbReference>
<dbReference type="RefSeq" id="NP_536440.1">
    <property type="nucleotide sequence ID" value="NC_003310.1"/>
</dbReference>
<dbReference type="SMR" id="Q8V566"/>
<dbReference type="GeneID" id="929018"/>
<dbReference type="KEGG" id="vg:929018"/>
<dbReference type="Proteomes" id="UP000101269">
    <property type="component" value="Genome"/>
</dbReference>
<dbReference type="GO" id="GO:0016032">
    <property type="term" value="P:viral process"/>
    <property type="evidence" value="ECO:0007669"/>
    <property type="project" value="InterPro"/>
</dbReference>
<dbReference type="InterPro" id="IPR004967">
    <property type="entry name" value="Poxvirus_C7/F8A"/>
</dbReference>
<dbReference type="Pfam" id="PF03287">
    <property type="entry name" value="Pox_C7_F8A"/>
    <property type="match status" value="1"/>
</dbReference>
<dbReference type="PIRSF" id="PIRSF003779">
    <property type="entry name" value="VAC_C7L"/>
    <property type="match status" value="1"/>
</dbReference>
<reference key="1">
    <citation type="journal article" date="2001" name="FEBS Lett.">
        <title>Human monkeypox and smallpox viruses: genomic comparison.</title>
        <authorList>
            <person name="Shchelkunov S.N."/>
            <person name="Totmenin A.V."/>
            <person name="Babkin I.V."/>
            <person name="Safronov P.F."/>
            <person name="Ryazankina O.I."/>
            <person name="Petrov N.A."/>
            <person name="Gutorov V.V."/>
            <person name="Uvarova E.A."/>
            <person name="Mikheev M.V."/>
            <person name="Sisler J.R."/>
            <person name="Esposito J.J."/>
            <person name="Jahrling P.B."/>
            <person name="Moss B."/>
            <person name="Sandakhchiev L.S."/>
        </authorList>
    </citation>
    <scope>NUCLEOTIDE SEQUENCE [LARGE SCALE GENOMIC DNA]</scope>
    <source>
        <strain>Zaire-96-I-16</strain>
    </source>
</reference>
<keyword id="KW-0244">Early protein</keyword>
<name>PG027_MONPZ</name>
<proteinExistence type="inferred from homology"/>
<feature type="chain" id="PRO_0000099395" description="Interferon antagonist OPG027">
    <location>
        <begin position="1"/>
        <end position="150"/>
    </location>
</feature>
<gene>
    <name type="primary">OPG027</name>
    <name type="ORF">D10L</name>
</gene>
<protein>
    <recommendedName>
        <fullName>Interferon antagonist OPG027</fullName>
    </recommendedName>
    <alternativeName>
        <fullName>Host range protein 2</fullName>
    </alternativeName>
</protein>
<evidence type="ECO:0000250" key="1"/>
<evidence type="ECO:0000250" key="2">
    <source>
        <dbReference type="UniProtKB" id="P68600"/>
    </source>
</evidence>
<evidence type="ECO:0000305" key="3"/>
<organism>
    <name type="scientific">Monkeypox virus (strain Zaire-96-I-16)</name>
    <name type="common">MPX</name>
    <dbReference type="NCBI Taxonomy" id="619591"/>
    <lineage>
        <taxon>Viruses</taxon>
        <taxon>Varidnaviria</taxon>
        <taxon>Bamfordvirae</taxon>
        <taxon>Nucleocytoviricota</taxon>
        <taxon>Pokkesviricetes</taxon>
        <taxon>Chitovirales</taxon>
        <taxon>Poxviridae</taxon>
        <taxon>Chordopoxvirinae</taxon>
        <taxon>Orthopoxvirus</taxon>
        <taxon>Monkeypox virus</taxon>
    </lineage>
</organism>
<accession>Q8V566</accession>